<name>PSTB2_MYCBO</name>
<keyword id="KW-0067">ATP-binding</keyword>
<keyword id="KW-1003">Cell membrane</keyword>
<keyword id="KW-0472">Membrane</keyword>
<keyword id="KW-0547">Nucleotide-binding</keyword>
<keyword id="KW-0592">Phosphate transport</keyword>
<keyword id="KW-1185">Reference proteome</keyword>
<keyword id="KW-1278">Translocase</keyword>
<keyword id="KW-0813">Transport</keyword>
<reference key="1">
    <citation type="journal article" date="2003" name="Proc. Natl. Acad. Sci. U.S.A.">
        <title>The complete genome sequence of Mycobacterium bovis.</title>
        <authorList>
            <person name="Garnier T."/>
            <person name="Eiglmeier K."/>
            <person name="Camus J.-C."/>
            <person name="Medina N."/>
            <person name="Mansoor H."/>
            <person name="Pryor M."/>
            <person name="Duthoy S."/>
            <person name="Grondin S."/>
            <person name="Lacroix C."/>
            <person name="Monsempe C."/>
            <person name="Simon S."/>
            <person name="Harris B."/>
            <person name="Atkin R."/>
            <person name="Doggett J."/>
            <person name="Mayes R."/>
            <person name="Keating L."/>
            <person name="Wheeler P.R."/>
            <person name="Parkhill J."/>
            <person name="Barrell B.G."/>
            <person name="Cole S.T."/>
            <person name="Gordon S.V."/>
            <person name="Hewinson R.G."/>
        </authorList>
    </citation>
    <scope>NUCLEOTIDE SEQUENCE [LARGE SCALE GENOMIC DNA]</scope>
    <source>
        <strain>ATCC BAA-935 / AF2122/97</strain>
    </source>
</reference>
<reference key="2">
    <citation type="journal article" date="2017" name="Genome Announc.">
        <title>Updated reference genome sequence and annotation of Mycobacterium bovis AF2122/97.</title>
        <authorList>
            <person name="Malone K.M."/>
            <person name="Farrell D."/>
            <person name="Stuber T.P."/>
            <person name="Schubert O.T."/>
            <person name="Aebersold R."/>
            <person name="Robbe-Austerman S."/>
            <person name="Gordon S.V."/>
        </authorList>
    </citation>
    <scope>NUCLEOTIDE SEQUENCE [LARGE SCALE GENOMIC DNA]</scope>
    <scope>GENOME REANNOTATION</scope>
    <source>
        <strain>ATCC BAA-935 / AF2122/97</strain>
    </source>
</reference>
<sequence>MACERLGGQSGAADVDAAAPAMAAVNLTLGFAGKTVLDQVSMGFPARAVTSLMGPTGSGKTTFLRTLNRMNDKVSGYRYSGDVLLGGRSIFNYRDVLEFRRRVGMLFQRPNPFPMSIMDNVLAGVRAHKLVPRKEFRGVAQARLTEVGLWDAVKDRLSDSPFRLSGGQQQLLCLARTLAVNPEVLLLDEPTSALDPTTTEKIEEFIRSLADRLTVIIVTHNLAQAARISDRAALFFDGRLVEEGPTEQLFSSPKHAETARYVAGLSGDVKDAKRGN</sequence>
<organism>
    <name type="scientific">Mycobacterium bovis (strain ATCC BAA-935 / AF2122/97)</name>
    <dbReference type="NCBI Taxonomy" id="233413"/>
    <lineage>
        <taxon>Bacteria</taxon>
        <taxon>Bacillati</taxon>
        <taxon>Actinomycetota</taxon>
        <taxon>Actinomycetes</taxon>
        <taxon>Mycobacteriales</taxon>
        <taxon>Mycobacteriaceae</taxon>
        <taxon>Mycobacterium</taxon>
        <taxon>Mycobacterium tuberculosis complex</taxon>
    </lineage>
</organism>
<accession>Q7U0Z9</accession>
<accession>A0A1R3XWV0</accession>
<accession>A0A1R3XX82</accession>
<accession>Q7U100</accession>
<accession>X2BG85</accession>
<proteinExistence type="inferred from homology"/>
<gene>
    <name evidence="1" type="primary">pstB2</name>
    <name type="synonym">pstBa</name>
    <name type="synonym">pstBB</name>
    <name type="ordered locus">BQ2027_MB0957/BQ2027_MB0958</name>
</gene>
<comment type="function">
    <text evidence="1">Part of the ABC transporter complex PstSACB involved in phosphate import. Responsible for energy coupling to the transport system.</text>
</comment>
<comment type="catalytic activity">
    <reaction evidence="1">
        <text>phosphate(out) + ATP + H2O = ADP + 2 phosphate(in) + H(+)</text>
        <dbReference type="Rhea" id="RHEA:24440"/>
        <dbReference type="ChEBI" id="CHEBI:15377"/>
        <dbReference type="ChEBI" id="CHEBI:15378"/>
        <dbReference type="ChEBI" id="CHEBI:30616"/>
        <dbReference type="ChEBI" id="CHEBI:43474"/>
        <dbReference type="ChEBI" id="CHEBI:456216"/>
        <dbReference type="EC" id="7.3.2.1"/>
    </reaction>
</comment>
<comment type="subunit">
    <text evidence="1">The complex is composed of two ATP-binding proteins (PstB), two transmembrane proteins (PstC and PstA) and a solute-binding protein (PstS).</text>
</comment>
<comment type="subcellular location">
    <subcellularLocation>
        <location evidence="1">Cell membrane</location>
        <topology evidence="1">Peripheral membrane protein</topology>
    </subcellularLocation>
</comment>
<comment type="similarity">
    <text evidence="1">Belongs to the ABC transporter superfamily. Phosphate importer (TC 3.A.1.7) family.</text>
</comment>
<comment type="sequence caution" evidence="2">
    <conflict type="frameshift">
        <sequence resource="EMBL-CDS" id="SIT99555"/>
    </conflict>
</comment>
<comment type="sequence caution" evidence="2">
    <conflict type="frameshift">
        <sequence resource="EMBL-CDS" id="SIT99556"/>
    </conflict>
</comment>
<feature type="chain" id="PRO_0000092838" description="Phosphate import ATP-binding protein PstB 2">
    <location>
        <begin position="1"/>
        <end position="276"/>
    </location>
</feature>
<feature type="domain" description="ABC transporter" evidence="1">
    <location>
        <begin position="22"/>
        <end position="262"/>
    </location>
</feature>
<feature type="binding site" evidence="1">
    <location>
        <begin position="54"/>
        <end position="61"/>
    </location>
    <ligand>
        <name>ATP</name>
        <dbReference type="ChEBI" id="CHEBI:30616"/>
    </ligand>
</feature>
<dbReference type="EC" id="7.3.2.1" evidence="1"/>
<dbReference type="EMBL" id="LT708304">
    <property type="protein sequence ID" value="SIT99555.1"/>
    <property type="status" value="ALT_FRAME"/>
    <property type="molecule type" value="Genomic_DNA"/>
</dbReference>
<dbReference type="EMBL" id="LT708304">
    <property type="protein sequence ID" value="SIT99556.1"/>
    <property type="status" value="ALT_FRAME"/>
    <property type="molecule type" value="Genomic_DNA"/>
</dbReference>
<dbReference type="RefSeq" id="NP_854614.1">
    <property type="nucleotide sequence ID" value="NC_002945.3"/>
</dbReference>
<dbReference type="SMR" id="Q7U0Z9"/>
<dbReference type="KEGG" id="mbo:BQ2027_MB0957"/>
<dbReference type="KEGG" id="mbo:BQ2027_MB0958"/>
<dbReference type="PATRIC" id="fig|233413.5.peg.1042"/>
<dbReference type="Proteomes" id="UP000001419">
    <property type="component" value="Chromosome"/>
</dbReference>
<dbReference type="GO" id="GO:0005886">
    <property type="term" value="C:plasma membrane"/>
    <property type="evidence" value="ECO:0007669"/>
    <property type="project" value="UniProtKB-SubCell"/>
</dbReference>
<dbReference type="GO" id="GO:0005524">
    <property type="term" value="F:ATP binding"/>
    <property type="evidence" value="ECO:0007669"/>
    <property type="project" value="UniProtKB-KW"/>
</dbReference>
<dbReference type="GO" id="GO:0016887">
    <property type="term" value="F:ATP hydrolysis activity"/>
    <property type="evidence" value="ECO:0007669"/>
    <property type="project" value="InterPro"/>
</dbReference>
<dbReference type="GO" id="GO:0015415">
    <property type="term" value="F:ATPase-coupled phosphate ion transmembrane transporter activity"/>
    <property type="evidence" value="ECO:0007669"/>
    <property type="project" value="UniProtKB-EC"/>
</dbReference>
<dbReference type="GO" id="GO:0035435">
    <property type="term" value="P:phosphate ion transmembrane transport"/>
    <property type="evidence" value="ECO:0007669"/>
    <property type="project" value="InterPro"/>
</dbReference>
<dbReference type="CDD" id="cd03260">
    <property type="entry name" value="ABC_PstB_phosphate_transporter"/>
    <property type="match status" value="1"/>
</dbReference>
<dbReference type="Gene3D" id="3.40.50.300">
    <property type="entry name" value="P-loop containing nucleotide triphosphate hydrolases"/>
    <property type="match status" value="1"/>
</dbReference>
<dbReference type="InterPro" id="IPR003593">
    <property type="entry name" value="AAA+_ATPase"/>
</dbReference>
<dbReference type="InterPro" id="IPR003439">
    <property type="entry name" value="ABC_transporter-like_ATP-bd"/>
</dbReference>
<dbReference type="InterPro" id="IPR017871">
    <property type="entry name" value="ABC_transporter-like_CS"/>
</dbReference>
<dbReference type="InterPro" id="IPR027417">
    <property type="entry name" value="P-loop_NTPase"/>
</dbReference>
<dbReference type="InterPro" id="IPR005670">
    <property type="entry name" value="PstB-like"/>
</dbReference>
<dbReference type="NCBIfam" id="TIGR00972">
    <property type="entry name" value="3a0107s01c2"/>
    <property type="match status" value="1"/>
</dbReference>
<dbReference type="NCBIfam" id="NF010864">
    <property type="entry name" value="PRK14271.1"/>
    <property type="match status" value="1"/>
</dbReference>
<dbReference type="PANTHER" id="PTHR43423">
    <property type="entry name" value="ABC TRANSPORTER I FAMILY MEMBER 17"/>
    <property type="match status" value="1"/>
</dbReference>
<dbReference type="PANTHER" id="PTHR43423:SF1">
    <property type="entry name" value="ABC TRANSPORTER I FAMILY MEMBER 17"/>
    <property type="match status" value="1"/>
</dbReference>
<dbReference type="Pfam" id="PF00005">
    <property type="entry name" value="ABC_tran"/>
    <property type="match status" value="1"/>
</dbReference>
<dbReference type="SMART" id="SM00382">
    <property type="entry name" value="AAA"/>
    <property type="match status" value="1"/>
</dbReference>
<dbReference type="SUPFAM" id="SSF52540">
    <property type="entry name" value="P-loop containing nucleoside triphosphate hydrolases"/>
    <property type="match status" value="1"/>
</dbReference>
<dbReference type="PROSITE" id="PS00211">
    <property type="entry name" value="ABC_TRANSPORTER_1"/>
    <property type="match status" value="1"/>
</dbReference>
<dbReference type="PROSITE" id="PS50893">
    <property type="entry name" value="ABC_TRANSPORTER_2"/>
    <property type="match status" value="1"/>
</dbReference>
<dbReference type="PROSITE" id="PS51238">
    <property type="entry name" value="PSTB"/>
    <property type="match status" value="1"/>
</dbReference>
<evidence type="ECO:0000255" key="1">
    <source>
        <dbReference type="HAMAP-Rule" id="MF_01702"/>
    </source>
</evidence>
<evidence type="ECO:0000305" key="2"/>
<protein>
    <recommendedName>
        <fullName evidence="1">Phosphate import ATP-binding protein PstB 2</fullName>
        <ecNumber evidence="1">7.3.2.1</ecNumber>
    </recommendedName>
    <alternativeName>
        <fullName evidence="1">ABC phosphate transporter 2</fullName>
    </alternativeName>
    <alternativeName>
        <fullName evidence="1">Phosphate-transporting ATPase 2</fullName>
    </alternativeName>
</protein>